<accession>B9KMG1</accession>
<sequence>MKLFVGLGNPGARYAGNRHNIGYMAVEAIAADHGFGPWRARFQGLTSEGRLGSEQVLLLKPETFMNLSGQSVGEAMRFYKLTPADVIVFHDELDLAPGKLRLKQGGGHAGHNGLRSIHAHVGEAYGRVRLGIGHPGHKDAVAAYVLNDFAKADQDWLADLLRGISDGAEALARGDGAKFQNAVALRMQPPKPEKPKPAAKAPEAQAPEAAPDARSALQKLADRFR</sequence>
<proteinExistence type="inferred from homology"/>
<feature type="chain" id="PRO_1000118406" description="Peptidyl-tRNA hydrolase">
    <location>
        <begin position="1"/>
        <end position="225"/>
    </location>
</feature>
<feature type="region of interest" description="Disordered" evidence="2">
    <location>
        <begin position="184"/>
        <end position="225"/>
    </location>
</feature>
<feature type="compositionally biased region" description="Low complexity" evidence="2">
    <location>
        <begin position="198"/>
        <end position="210"/>
    </location>
</feature>
<feature type="active site" description="Proton acceptor" evidence="1">
    <location>
        <position position="19"/>
    </location>
</feature>
<feature type="binding site" evidence="1">
    <location>
        <position position="14"/>
    </location>
    <ligand>
        <name>tRNA</name>
        <dbReference type="ChEBI" id="CHEBI:17843"/>
    </ligand>
</feature>
<feature type="binding site" evidence="1">
    <location>
        <position position="64"/>
    </location>
    <ligand>
        <name>tRNA</name>
        <dbReference type="ChEBI" id="CHEBI:17843"/>
    </ligand>
</feature>
<feature type="binding site" evidence="1">
    <location>
        <position position="66"/>
    </location>
    <ligand>
        <name>tRNA</name>
        <dbReference type="ChEBI" id="CHEBI:17843"/>
    </ligand>
</feature>
<feature type="binding site" evidence="1">
    <location>
        <position position="112"/>
    </location>
    <ligand>
        <name>tRNA</name>
        <dbReference type="ChEBI" id="CHEBI:17843"/>
    </ligand>
</feature>
<feature type="site" description="Discriminates between blocked and unblocked aminoacyl-tRNA" evidence="1">
    <location>
        <position position="9"/>
    </location>
</feature>
<feature type="site" description="Stabilizes the basic form of H active site to accept a proton" evidence="1">
    <location>
        <position position="91"/>
    </location>
</feature>
<organism>
    <name type="scientific">Cereibacter sphaeroides (strain KD131 / KCTC 12085)</name>
    <name type="common">Rhodobacter sphaeroides</name>
    <dbReference type="NCBI Taxonomy" id="557760"/>
    <lineage>
        <taxon>Bacteria</taxon>
        <taxon>Pseudomonadati</taxon>
        <taxon>Pseudomonadota</taxon>
        <taxon>Alphaproteobacteria</taxon>
        <taxon>Rhodobacterales</taxon>
        <taxon>Paracoccaceae</taxon>
        <taxon>Cereibacter</taxon>
    </lineage>
</organism>
<reference key="1">
    <citation type="journal article" date="2009" name="J. Bacteriol.">
        <title>Complete genome sequence of Rhodobacter sphaeroides KD131.</title>
        <authorList>
            <person name="Lim S.-K."/>
            <person name="Kim S.J."/>
            <person name="Cha S.H."/>
            <person name="Oh Y.-K."/>
            <person name="Rhee H.-J."/>
            <person name="Kim M.-S."/>
            <person name="Lee J.K."/>
        </authorList>
    </citation>
    <scope>NUCLEOTIDE SEQUENCE [LARGE SCALE GENOMIC DNA]</scope>
    <source>
        <strain>KD131 / KCTC 12085</strain>
    </source>
</reference>
<name>PTH_CERSK</name>
<gene>
    <name evidence="1" type="primary">pth</name>
    <name type="ordered locus">RSKD131_2192</name>
</gene>
<dbReference type="EC" id="3.1.1.29" evidence="1"/>
<dbReference type="EMBL" id="CP001150">
    <property type="protein sequence ID" value="ACM02052.1"/>
    <property type="molecule type" value="Genomic_DNA"/>
</dbReference>
<dbReference type="RefSeq" id="WP_015921252.1">
    <property type="nucleotide sequence ID" value="NC_011963.1"/>
</dbReference>
<dbReference type="SMR" id="B9KMG1"/>
<dbReference type="GeneID" id="67447579"/>
<dbReference type="KEGG" id="rsk:RSKD131_2192"/>
<dbReference type="HOGENOM" id="CLU_062456_1_0_5"/>
<dbReference type="GO" id="GO:0005737">
    <property type="term" value="C:cytoplasm"/>
    <property type="evidence" value="ECO:0007669"/>
    <property type="project" value="UniProtKB-SubCell"/>
</dbReference>
<dbReference type="GO" id="GO:0004045">
    <property type="term" value="F:peptidyl-tRNA hydrolase activity"/>
    <property type="evidence" value="ECO:0007669"/>
    <property type="project" value="UniProtKB-UniRule"/>
</dbReference>
<dbReference type="GO" id="GO:0000049">
    <property type="term" value="F:tRNA binding"/>
    <property type="evidence" value="ECO:0007669"/>
    <property type="project" value="UniProtKB-UniRule"/>
</dbReference>
<dbReference type="GO" id="GO:0006515">
    <property type="term" value="P:protein quality control for misfolded or incompletely synthesized proteins"/>
    <property type="evidence" value="ECO:0007669"/>
    <property type="project" value="UniProtKB-UniRule"/>
</dbReference>
<dbReference type="GO" id="GO:0072344">
    <property type="term" value="P:rescue of stalled ribosome"/>
    <property type="evidence" value="ECO:0007669"/>
    <property type="project" value="UniProtKB-UniRule"/>
</dbReference>
<dbReference type="CDD" id="cd00462">
    <property type="entry name" value="PTH"/>
    <property type="match status" value="1"/>
</dbReference>
<dbReference type="FunFam" id="3.40.50.1470:FF:000001">
    <property type="entry name" value="Peptidyl-tRNA hydrolase"/>
    <property type="match status" value="1"/>
</dbReference>
<dbReference type="Gene3D" id="3.40.50.1470">
    <property type="entry name" value="Peptidyl-tRNA hydrolase"/>
    <property type="match status" value="1"/>
</dbReference>
<dbReference type="HAMAP" id="MF_00083">
    <property type="entry name" value="Pept_tRNA_hydro_bact"/>
    <property type="match status" value="1"/>
</dbReference>
<dbReference type="InterPro" id="IPR001328">
    <property type="entry name" value="Pept_tRNA_hydro"/>
</dbReference>
<dbReference type="InterPro" id="IPR018171">
    <property type="entry name" value="Pept_tRNA_hydro_CS"/>
</dbReference>
<dbReference type="InterPro" id="IPR036416">
    <property type="entry name" value="Pept_tRNA_hydro_sf"/>
</dbReference>
<dbReference type="NCBIfam" id="TIGR00447">
    <property type="entry name" value="pth"/>
    <property type="match status" value="1"/>
</dbReference>
<dbReference type="PANTHER" id="PTHR17224">
    <property type="entry name" value="PEPTIDYL-TRNA HYDROLASE"/>
    <property type="match status" value="1"/>
</dbReference>
<dbReference type="PANTHER" id="PTHR17224:SF1">
    <property type="entry name" value="PEPTIDYL-TRNA HYDROLASE"/>
    <property type="match status" value="1"/>
</dbReference>
<dbReference type="Pfam" id="PF01195">
    <property type="entry name" value="Pept_tRNA_hydro"/>
    <property type="match status" value="1"/>
</dbReference>
<dbReference type="SUPFAM" id="SSF53178">
    <property type="entry name" value="Peptidyl-tRNA hydrolase-like"/>
    <property type="match status" value="1"/>
</dbReference>
<dbReference type="PROSITE" id="PS01195">
    <property type="entry name" value="PEPT_TRNA_HYDROL_1"/>
    <property type="match status" value="1"/>
</dbReference>
<dbReference type="PROSITE" id="PS01196">
    <property type="entry name" value="PEPT_TRNA_HYDROL_2"/>
    <property type="match status" value="1"/>
</dbReference>
<comment type="function">
    <text evidence="1">Hydrolyzes ribosome-free peptidyl-tRNAs (with 1 or more amino acids incorporated), which drop off the ribosome during protein synthesis, or as a result of ribosome stalling.</text>
</comment>
<comment type="function">
    <text evidence="1">Catalyzes the release of premature peptidyl moieties from peptidyl-tRNA molecules trapped in stalled 50S ribosomal subunits, and thus maintains levels of free tRNAs and 50S ribosomes.</text>
</comment>
<comment type="catalytic activity">
    <reaction evidence="1">
        <text>an N-acyl-L-alpha-aminoacyl-tRNA + H2O = an N-acyl-L-amino acid + a tRNA + H(+)</text>
        <dbReference type="Rhea" id="RHEA:54448"/>
        <dbReference type="Rhea" id="RHEA-COMP:10123"/>
        <dbReference type="Rhea" id="RHEA-COMP:13883"/>
        <dbReference type="ChEBI" id="CHEBI:15377"/>
        <dbReference type="ChEBI" id="CHEBI:15378"/>
        <dbReference type="ChEBI" id="CHEBI:59874"/>
        <dbReference type="ChEBI" id="CHEBI:78442"/>
        <dbReference type="ChEBI" id="CHEBI:138191"/>
        <dbReference type="EC" id="3.1.1.29"/>
    </reaction>
</comment>
<comment type="subunit">
    <text evidence="1">Monomer.</text>
</comment>
<comment type="subcellular location">
    <subcellularLocation>
        <location evidence="1">Cytoplasm</location>
    </subcellularLocation>
</comment>
<comment type="similarity">
    <text evidence="1">Belongs to the PTH family.</text>
</comment>
<keyword id="KW-0963">Cytoplasm</keyword>
<keyword id="KW-0378">Hydrolase</keyword>
<keyword id="KW-0694">RNA-binding</keyword>
<keyword id="KW-0820">tRNA-binding</keyword>
<evidence type="ECO:0000255" key="1">
    <source>
        <dbReference type="HAMAP-Rule" id="MF_00083"/>
    </source>
</evidence>
<evidence type="ECO:0000256" key="2">
    <source>
        <dbReference type="SAM" id="MobiDB-lite"/>
    </source>
</evidence>
<protein>
    <recommendedName>
        <fullName evidence="1">Peptidyl-tRNA hydrolase</fullName>
        <shortName evidence="1">Pth</shortName>
        <ecNumber evidence="1">3.1.1.29</ecNumber>
    </recommendedName>
</protein>